<keyword id="KW-0010">Activator</keyword>
<keyword id="KW-0025">Alternative splicing</keyword>
<keyword id="KW-0238">DNA-binding</keyword>
<keyword id="KW-0539">Nucleus</keyword>
<keyword id="KW-1185">Reference proteome</keyword>
<keyword id="KW-0804">Transcription</keyword>
<keyword id="KW-0805">Transcription regulation</keyword>
<organism>
    <name type="scientific">Mus musculus</name>
    <name type="common">Mouse</name>
    <dbReference type="NCBI Taxonomy" id="10090"/>
    <lineage>
        <taxon>Eukaryota</taxon>
        <taxon>Metazoa</taxon>
        <taxon>Chordata</taxon>
        <taxon>Craniata</taxon>
        <taxon>Vertebrata</taxon>
        <taxon>Euteleostomi</taxon>
        <taxon>Mammalia</taxon>
        <taxon>Eutheria</taxon>
        <taxon>Euarchontoglires</taxon>
        <taxon>Glires</taxon>
        <taxon>Rodentia</taxon>
        <taxon>Myomorpha</taxon>
        <taxon>Muroidea</taxon>
        <taxon>Muridae</taxon>
        <taxon>Murinae</taxon>
        <taxon>Mus</taxon>
        <taxon>Mus</taxon>
    </lineage>
</organism>
<reference key="1">
    <citation type="submission" date="2003-07" db="EMBL/GenBank/DDBJ databases">
        <title>Mouse Rfx4, a gene expressed in the proliferative zones of the central nervous system.</title>
        <authorList>
            <person name="Belaoussoff M."/>
            <person name="Dohrmann C.E."/>
            <person name="Armsen W."/>
            <person name="Gruss P."/>
        </authorList>
    </citation>
    <scope>NUCLEOTIDE SEQUENCE [MRNA] (ISOFORM 1)</scope>
</reference>
<reference key="2">
    <citation type="journal article" date="2003" name="Development">
        <title>Graded phenotypic response to partial and complete deficiency of a brain-specific transcript variant of the winged helix transcription factor RFX4.</title>
        <authorList>
            <person name="Blackshear P.J."/>
            <person name="Graves J.P."/>
            <person name="Stumpo D.J."/>
            <person name="Cobos I."/>
            <person name="Rubenstein J.L.R."/>
            <person name="Zeldin D.C."/>
        </authorList>
    </citation>
    <scope>NUCLEOTIDE SEQUENCE [MRNA] (ISOFORM 1)</scope>
    <scope>FUNCTION</scope>
    <scope>TISSUE SPECIFICITY</scope>
    <scope>DEVELOPMENTAL STAGE</scope>
    <scope>DISRUPTION PHENOTYPE</scope>
    <source>
        <strain>C57BL/6J</strain>
        <tissue>Brain</tissue>
    </source>
</reference>
<reference key="3">
    <citation type="journal article" date="2004" name="J. Biol. Chem.">
        <title>Restricted expression and photic induction of a novel mouse regulatory factor X4 transcript in the suprachiasmatic nucleus.</title>
        <authorList>
            <person name="Araki R."/>
            <person name="Takahashi H."/>
            <person name="Fukumura R."/>
            <person name="Sun F."/>
            <person name="Umeda N."/>
            <person name="Sujino M."/>
            <person name="Inouye S.T."/>
            <person name="Saito T."/>
            <person name="Abe M."/>
        </authorList>
    </citation>
    <scope>NUCLEOTIDE SEQUENCE [MRNA] (ISOFORMS 1 AND 2)</scope>
    <scope>SUBCELLULAR LOCATION</scope>
    <scope>INDUCTION</scope>
    <scope>TISSUE SPECIFICITY</scope>
    <source>
        <strain>C57BL/6J</strain>
        <tissue>Suprachiasmatic nucleus</tissue>
        <tissue>Testis</tissue>
    </source>
</reference>
<reference key="4">
    <citation type="journal article" date="2005" name="Science">
        <title>The transcriptional landscape of the mammalian genome.</title>
        <authorList>
            <person name="Carninci P."/>
            <person name="Kasukawa T."/>
            <person name="Katayama S."/>
            <person name="Gough J."/>
            <person name="Frith M.C."/>
            <person name="Maeda N."/>
            <person name="Oyama R."/>
            <person name="Ravasi T."/>
            <person name="Lenhard B."/>
            <person name="Wells C."/>
            <person name="Kodzius R."/>
            <person name="Shimokawa K."/>
            <person name="Bajic V.B."/>
            <person name="Brenner S.E."/>
            <person name="Batalov S."/>
            <person name="Forrest A.R."/>
            <person name="Zavolan M."/>
            <person name="Davis M.J."/>
            <person name="Wilming L.G."/>
            <person name="Aidinis V."/>
            <person name="Allen J.E."/>
            <person name="Ambesi-Impiombato A."/>
            <person name="Apweiler R."/>
            <person name="Aturaliya R.N."/>
            <person name="Bailey T.L."/>
            <person name="Bansal M."/>
            <person name="Baxter L."/>
            <person name="Beisel K.W."/>
            <person name="Bersano T."/>
            <person name="Bono H."/>
            <person name="Chalk A.M."/>
            <person name="Chiu K.P."/>
            <person name="Choudhary V."/>
            <person name="Christoffels A."/>
            <person name="Clutterbuck D.R."/>
            <person name="Crowe M.L."/>
            <person name="Dalla E."/>
            <person name="Dalrymple B.P."/>
            <person name="de Bono B."/>
            <person name="Della Gatta G."/>
            <person name="di Bernardo D."/>
            <person name="Down T."/>
            <person name="Engstrom P."/>
            <person name="Fagiolini M."/>
            <person name="Faulkner G."/>
            <person name="Fletcher C.F."/>
            <person name="Fukushima T."/>
            <person name="Furuno M."/>
            <person name="Futaki S."/>
            <person name="Gariboldi M."/>
            <person name="Georgii-Hemming P."/>
            <person name="Gingeras T.R."/>
            <person name="Gojobori T."/>
            <person name="Green R.E."/>
            <person name="Gustincich S."/>
            <person name="Harbers M."/>
            <person name="Hayashi Y."/>
            <person name="Hensch T.K."/>
            <person name="Hirokawa N."/>
            <person name="Hill D."/>
            <person name="Huminiecki L."/>
            <person name="Iacono M."/>
            <person name="Ikeo K."/>
            <person name="Iwama A."/>
            <person name="Ishikawa T."/>
            <person name="Jakt M."/>
            <person name="Kanapin A."/>
            <person name="Katoh M."/>
            <person name="Kawasawa Y."/>
            <person name="Kelso J."/>
            <person name="Kitamura H."/>
            <person name="Kitano H."/>
            <person name="Kollias G."/>
            <person name="Krishnan S.P."/>
            <person name="Kruger A."/>
            <person name="Kummerfeld S.K."/>
            <person name="Kurochkin I.V."/>
            <person name="Lareau L.F."/>
            <person name="Lazarevic D."/>
            <person name="Lipovich L."/>
            <person name="Liu J."/>
            <person name="Liuni S."/>
            <person name="McWilliam S."/>
            <person name="Madan Babu M."/>
            <person name="Madera M."/>
            <person name="Marchionni L."/>
            <person name="Matsuda H."/>
            <person name="Matsuzawa S."/>
            <person name="Miki H."/>
            <person name="Mignone F."/>
            <person name="Miyake S."/>
            <person name="Morris K."/>
            <person name="Mottagui-Tabar S."/>
            <person name="Mulder N."/>
            <person name="Nakano N."/>
            <person name="Nakauchi H."/>
            <person name="Ng P."/>
            <person name="Nilsson R."/>
            <person name="Nishiguchi S."/>
            <person name="Nishikawa S."/>
            <person name="Nori F."/>
            <person name="Ohara O."/>
            <person name="Okazaki Y."/>
            <person name="Orlando V."/>
            <person name="Pang K.C."/>
            <person name="Pavan W.J."/>
            <person name="Pavesi G."/>
            <person name="Pesole G."/>
            <person name="Petrovsky N."/>
            <person name="Piazza S."/>
            <person name="Reed J."/>
            <person name="Reid J.F."/>
            <person name="Ring B.Z."/>
            <person name="Ringwald M."/>
            <person name="Rost B."/>
            <person name="Ruan Y."/>
            <person name="Salzberg S.L."/>
            <person name="Sandelin A."/>
            <person name="Schneider C."/>
            <person name="Schoenbach C."/>
            <person name="Sekiguchi K."/>
            <person name="Semple C.A."/>
            <person name="Seno S."/>
            <person name="Sessa L."/>
            <person name="Sheng Y."/>
            <person name="Shibata Y."/>
            <person name="Shimada H."/>
            <person name="Shimada K."/>
            <person name="Silva D."/>
            <person name="Sinclair B."/>
            <person name="Sperling S."/>
            <person name="Stupka E."/>
            <person name="Sugiura K."/>
            <person name="Sultana R."/>
            <person name="Takenaka Y."/>
            <person name="Taki K."/>
            <person name="Tammoja K."/>
            <person name="Tan S.L."/>
            <person name="Tang S."/>
            <person name="Taylor M.S."/>
            <person name="Tegner J."/>
            <person name="Teichmann S.A."/>
            <person name="Ueda H.R."/>
            <person name="van Nimwegen E."/>
            <person name="Verardo R."/>
            <person name="Wei C.L."/>
            <person name="Yagi K."/>
            <person name="Yamanishi H."/>
            <person name="Zabarovsky E."/>
            <person name="Zhu S."/>
            <person name="Zimmer A."/>
            <person name="Hide W."/>
            <person name="Bult C."/>
            <person name="Grimmond S.M."/>
            <person name="Teasdale R.D."/>
            <person name="Liu E.T."/>
            <person name="Brusic V."/>
            <person name="Quackenbush J."/>
            <person name="Wahlestedt C."/>
            <person name="Mattick J.S."/>
            <person name="Hume D.A."/>
            <person name="Kai C."/>
            <person name="Sasaki D."/>
            <person name="Tomaru Y."/>
            <person name="Fukuda S."/>
            <person name="Kanamori-Katayama M."/>
            <person name="Suzuki M."/>
            <person name="Aoki J."/>
            <person name="Arakawa T."/>
            <person name="Iida J."/>
            <person name="Imamura K."/>
            <person name="Itoh M."/>
            <person name="Kato T."/>
            <person name="Kawaji H."/>
            <person name="Kawagashira N."/>
            <person name="Kawashima T."/>
            <person name="Kojima M."/>
            <person name="Kondo S."/>
            <person name="Konno H."/>
            <person name="Nakano K."/>
            <person name="Ninomiya N."/>
            <person name="Nishio T."/>
            <person name="Okada M."/>
            <person name="Plessy C."/>
            <person name="Shibata K."/>
            <person name="Shiraki T."/>
            <person name="Suzuki S."/>
            <person name="Tagami M."/>
            <person name="Waki K."/>
            <person name="Watahiki A."/>
            <person name="Okamura-Oho Y."/>
            <person name="Suzuki H."/>
            <person name="Kawai J."/>
            <person name="Hayashizaki Y."/>
        </authorList>
    </citation>
    <scope>NUCLEOTIDE SEQUENCE [LARGE SCALE MRNA] (ISOFORMS 1; 3 AND 4)</scope>
    <source>
        <strain>C57BL/6J</strain>
        <tissue>Diencephalon</tissue>
        <tissue>Testis</tissue>
    </source>
</reference>
<reference key="5">
    <citation type="journal article" date="2004" name="Genome Res.">
        <title>The status, quality, and expansion of the NIH full-length cDNA project: the Mammalian Gene Collection (MGC).</title>
        <authorList>
            <consortium name="The MGC Project Team"/>
        </authorList>
    </citation>
    <scope>NUCLEOTIDE SEQUENCE [LARGE SCALE MRNA] (ISOFORM 2)</scope>
    <source>
        <tissue>Brain</tissue>
    </source>
</reference>
<reference key="6">
    <citation type="journal article" date="2006" name="J. Neurochem.">
        <title>Identification of potential target genes for RFX4_v3, a transcription factor critical for brain development.</title>
        <authorList>
            <person name="Zhang D."/>
            <person name="Stumpo D.J."/>
            <person name="Graves J.P."/>
            <person name="DeGraff L.M."/>
            <person name="Grissom S.F."/>
            <person name="Collins J.B."/>
            <person name="Li L."/>
            <person name="Zeldin D.C."/>
            <person name="Blackshear P.J."/>
        </authorList>
    </citation>
    <scope>FUNCTION</scope>
    <scope>DISRUPTION PHENOTYPE</scope>
</reference>
<reference key="7">
    <citation type="journal article" date="2008" name="J. Biol. Chem.">
        <title>G-protein pathway suppressor 2 (GPS2) interacts with the regulatory factor X4 variant 3 (RFX4_v3) and functions as a transcriptional co-activator.</title>
        <authorList>
            <person name="Zhang D."/>
            <person name="Harry G.J."/>
            <person name="Blackshear P.J."/>
            <person name="Zeldin D.C."/>
        </authorList>
    </citation>
    <scope>FUNCTION</scope>
    <scope>SUBCELLULAR LOCATION</scope>
    <scope>INTERACTION WITH GPS2</scope>
</reference>
<comment type="function">
    <molecule>Isoform 1</molecule>
    <text evidence="1 5 7 8">Transcription factor that plays a role in early brain development. May activate transcription by interacting directly with the X-box. May activate transcription from CX3CL1 promoter through the X-box during brain development. May be required for neural tube ciliogenesis during embryogenesis (By similarity).</text>
</comment>
<comment type="subunit">
    <text evidence="2 8">Homodimer. Heterodimer with RFX2 and RFX3. Binds DNA (By similarity). Interacts with GPS2 (PubMed:18218630).</text>
</comment>
<comment type="subcellular location">
    <subcellularLocation>
        <location evidence="3 6 8">Nucleus</location>
    </subcellularLocation>
</comment>
<comment type="alternative products">
    <event type="alternative splicing"/>
    <isoform>
        <id>Q7TNK1-1</id>
        <name>1</name>
        <name>bRFX4</name>
        <name>RFX4_v3</name>
        <sequence type="displayed"/>
    </isoform>
    <isoform>
        <id>Q7TNK1-2</id>
        <name>2</name>
        <sequence type="described" ref="VSP_030248 VSP_030249"/>
    </isoform>
    <isoform>
        <id>Q7TNK1-3</id>
        <name>3</name>
        <sequence type="described" ref="VSP_030247"/>
    </isoform>
    <isoform>
        <id>Q7TNK1-4</id>
        <name>4</name>
        <sequence type="described" ref="VSP_030248 VSP_030249 VSP_030250 VSP_030251"/>
    </isoform>
</comment>
<comment type="tissue specificity">
    <text evidence="5 6">Isoform 1: Brain-specific. Isoform 2: Testis-specific. Isoform 1: Highly expressed in the suprachiasmatic nucleus, the central pacemaker site of the circadian clock (at protein level).</text>
</comment>
<comment type="developmental stage">
    <text evidence="5">At 8.5 dpc, detected in most of the neural plate but is excluded from the presumptive forebrain region. At 9.5 dpc, its expression is mostly restricted to two large regions, the caudal diencephalon/mesencephalon and the spinal cord. By 10.5 dpc, is present throughout the neural tube, and it is also detected in the cerebral cortex. It is also strongly expressed in the developing subcommissural organ (SCO) from 14.5 dpc to birth.</text>
</comment>
<comment type="induction">
    <molecule>Isoform 1</molecule>
    <text evidence="6">Induced in a subjective night-specific manner.</text>
</comment>
<comment type="disruption phenotype">
    <text evidence="5 7">Mice with an insertion of a cardiac-specific epoxygenase transgene into an intron in the Rfx4 locus develop head swelling and rapid neurological decline in young adulthood, and have marked hydrocephalus of the lateral and third ventricles. Interruption of two alleles results in profound failure of dorsal midline brain structure formation and perinatal death. Interruption of a single allele prevents formation of the subcommissural organ, a structure important for cerebrospinal fluid flow through the aqueduct of Sylvius and results in congenital hydrocephalus.</text>
</comment>
<comment type="similarity">
    <text evidence="3">Belongs to the RFX family.</text>
</comment>
<comment type="sequence caution" evidence="12">
    <conflict type="erroneous initiation">
        <sequence resource="EMBL-CDS" id="BAC28598"/>
    </conflict>
</comment>
<protein>
    <recommendedName>
        <fullName>Transcription factor RFX4</fullName>
    </recommendedName>
    <alternativeName>
        <fullName>Regulatory factor X 4</fullName>
    </alternativeName>
</protein>
<proteinExistence type="evidence at protein level"/>
<feature type="chain" id="PRO_0000314238" description="Transcription factor RFX4">
    <location>
        <begin position="1"/>
        <end position="735"/>
    </location>
</feature>
<feature type="DNA-binding region">
    <location>
        <begin position="44"/>
        <end position="126"/>
    </location>
</feature>
<feature type="DNA-binding region" description="RFX-type winged-helix" evidence="3">
    <location>
        <begin position="61"/>
        <end position="136"/>
    </location>
</feature>
<feature type="region of interest" description="Disordered" evidence="4">
    <location>
        <begin position="27"/>
        <end position="59"/>
    </location>
</feature>
<feature type="region of interest" description="Necessary for dimerization">
    <location>
        <begin position="315"/>
        <end position="487"/>
    </location>
</feature>
<feature type="region of interest" description="Disordered" evidence="4">
    <location>
        <begin position="501"/>
        <end position="538"/>
    </location>
</feature>
<feature type="compositionally biased region" description="Polar residues" evidence="4">
    <location>
        <begin position="32"/>
        <end position="41"/>
    </location>
</feature>
<feature type="splice variant" id="VSP_030247" description="In isoform 3." evidence="11">
    <location>
        <begin position="1"/>
        <end position="143"/>
    </location>
</feature>
<feature type="splice variant" id="VSP_030248" description="In isoform 2 and isoform 4." evidence="9 10 11">
    <location>
        <begin position="1"/>
        <end position="94"/>
    </location>
</feature>
<feature type="splice variant" id="VSP_030249" description="In isoform 2 and isoform 4." evidence="9 10 11">
    <original>TQPVNAASFGKIIRQQFPQLTTRRLGTRGQSK</original>
    <variation>MNWAAFGGPEFFIPGGMKMEASCPLGRNFTEW</variation>
    <location>
        <begin position="95"/>
        <end position="126"/>
    </location>
</feature>
<feature type="splice variant" id="VSP_030250" description="In isoform 4." evidence="11">
    <original>SFHLIHLMFDDYVLYLLESLHCQER</original>
    <variation>LFYCPASKATLLGQGWEAPCDLSGT</variation>
    <location>
        <begin position="452"/>
        <end position="476"/>
    </location>
</feature>
<feature type="splice variant" id="VSP_030251" description="In isoform 4." evidence="11">
    <location>
        <begin position="477"/>
        <end position="735"/>
    </location>
</feature>
<feature type="sequence conflict" description="In Ref. 4; BAB30432." evidence="12" ref="4">
    <original>F</original>
    <variation>L</variation>
    <location>
        <position position="227"/>
    </location>
</feature>
<feature type="sequence conflict" description="In Ref. 4; BAE21294." evidence="12" ref="4">
    <original>T</original>
    <variation>N</variation>
    <location>
        <position position="578"/>
    </location>
</feature>
<name>RFX4_MOUSE</name>
<evidence type="ECO:0000250" key="1">
    <source>
        <dbReference type="UniProtKB" id="A0A1L8GWK2"/>
    </source>
</evidence>
<evidence type="ECO:0000250" key="2">
    <source>
        <dbReference type="UniProtKB" id="Q33E94"/>
    </source>
</evidence>
<evidence type="ECO:0000255" key="3">
    <source>
        <dbReference type="PROSITE-ProRule" id="PRU00858"/>
    </source>
</evidence>
<evidence type="ECO:0000256" key="4">
    <source>
        <dbReference type="SAM" id="MobiDB-lite"/>
    </source>
</evidence>
<evidence type="ECO:0000269" key="5">
    <source>
    </source>
</evidence>
<evidence type="ECO:0000269" key="6">
    <source>
    </source>
</evidence>
<evidence type="ECO:0000269" key="7">
    <source>
    </source>
</evidence>
<evidence type="ECO:0000269" key="8">
    <source>
    </source>
</evidence>
<evidence type="ECO:0000303" key="9">
    <source>
    </source>
</evidence>
<evidence type="ECO:0000303" key="10">
    <source>
    </source>
</evidence>
<evidence type="ECO:0000303" key="11">
    <source>
    </source>
</evidence>
<evidence type="ECO:0000305" key="12"/>
<dbReference type="EMBL" id="AY342003">
    <property type="protein sequence ID" value="AAQ17042.1"/>
    <property type="molecule type" value="mRNA"/>
</dbReference>
<dbReference type="EMBL" id="AY102010">
    <property type="protein sequence ID" value="AAM52485.2"/>
    <property type="molecule type" value="mRNA"/>
</dbReference>
<dbReference type="EMBL" id="AB086957">
    <property type="protein sequence ID" value="BAD07408.1"/>
    <property type="molecule type" value="mRNA"/>
</dbReference>
<dbReference type="EMBL" id="AB089184">
    <property type="protein sequence ID" value="BAD07409.1"/>
    <property type="molecule type" value="mRNA"/>
</dbReference>
<dbReference type="EMBL" id="AK016791">
    <property type="protein sequence ID" value="BAB30432.1"/>
    <property type="molecule type" value="mRNA"/>
</dbReference>
<dbReference type="EMBL" id="AK034131">
    <property type="protein sequence ID" value="BAC28598.1"/>
    <property type="status" value="ALT_INIT"/>
    <property type="molecule type" value="mRNA"/>
</dbReference>
<dbReference type="EMBL" id="AK132673">
    <property type="protein sequence ID" value="BAE21294.1"/>
    <property type="molecule type" value="mRNA"/>
</dbReference>
<dbReference type="EMBL" id="BC138719">
    <property type="protein sequence ID" value="AAI38720.1"/>
    <property type="molecule type" value="mRNA"/>
</dbReference>
<dbReference type="EMBL" id="BC138720">
    <property type="protein sequence ID" value="AAI38721.1"/>
    <property type="molecule type" value="mRNA"/>
</dbReference>
<dbReference type="CCDS" id="CCDS24082.1">
    <molecule id="Q7TNK1-1"/>
</dbReference>
<dbReference type="CCDS" id="CCDS24083.1">
    <molecule id="Q7TNK1-2"/>
</dbReference>
<dbReference type="RefSeq" id="NP_001020089.1">
    <molecule id="Q7TNK1-1"/>
    <property type="nucleotide sequence ID" value="NM_001024918.1"/>
</dbReference>
<dbReference type="RefSeq" id="NP_081965.2">
    <molecule id="Q7TNK1-2"/>
    <property type="nucleotide sequence ID" value="NM_027689.3"/>
</dbReference>
<dbReference type="SMR" id="Q7TNK1"/>
<dbReference type="BioGRID" id="214500">
    <property type="interactions" value="5"/>
</dbReference>
<dbReference type="FunCoup" id="Q7TNK1">
    <property type="interactions" value="651"/>
</dbReference>
<dbReference type="IntAct" id="Q7TNK1">
    <property type="interactions" value="2"/>
</dbReference>
<dbReference type="STRING" id="10090.ENSMUSP00000051107"/>
<dbReference type="GlyGen" id="Q7TNK1">
    <property type="glycosylation" value="2 sites"/>
</dbReference>
<dbReference type="PhosphoSitePlus" id="Q7TNK1"/>
<dbReference type="PaxDb" id="10090-ENSMUSP00000051107"/>
<dbReference type="PeptideAtlas" id="Q7TNK1"/>
<dbReference type="ProteomicsDB" id="255242">
    <molecule id="Q7TNK1-1"/>
</dbReference>
<dbReference type="ProteomicsDB" id="255243">
    <molecule id="Q7TNK1-2"/>
</dbReference>
<dbReference type="ProteomicsDB" id="255244">
    <molecule id="Q7TNK1-3"/>
</dbReference>
<dbReference type="ProteomicsDB" id="255245">
    <molecule id="Q7TNK1-4"/>
</dbReference>
<dbReference type="Antibodypedia" id="30672">
    <property type="antibodies" value="135 antibodies from 22 providers"/>
</dbReference>
<dbReference type="DNASU" id="71137"/>
<dbReference type="Ensembl" id="ENSMUST00000060397.13">
    <molecule id="Q7TNK1-1"/>
    <property type="protein sequence ID" value="ENSMUSP00000051107.7"/>
    <property type="gene ID" value="ENSMUSG00000020037.16"/>
</dbReference>
<dbReference type="Ensembl" id="ENSMUST00000095388.5">
    <molecule id="Q7TNK1-2"/>
    <property type="protein sequence ID" value="ENSMUSP00000093035.5"/>
    <property type="gene ID" value="ENSMUSG00000020037.16"/>
</dbReference>
<dbReference type="Ensembl" id="ENSMUST00000166696.9">
    <molecule id="Q7TNK1-3"/>
    <property type="protein sequence ID" value="ENSMUSP00000128690.3"/>
    <property type="gene ID" value="ENSMUSG00000020037.16"/>
</dbReference>
<dbReference type="GeneID" id="71137"/>
<dbReference type="KEGG" id="mmu:71137"/>
<dbReference type="UCSC" id="uc007gkv.1">
    <molecule id="Q7TNK1-1"/>
    <property type="organism name" value="mouse"/>
</dbReference>
<dbReference type="UCSC" id="uc007gkw.1">
    <molecule id="Q7TNK1-2"/>
    <property type="organism name" value="mouse"/>
</dbReference>
<dbReference type="AGR" id="MGI:1918387"/>
<dbReference type="CTD" id="5992"/>
<dbReference type="MGI" id="MGI:1918387">
    <property type="gene designation" value="Rfx4"/>
</dbReference>
<dbReference type="VEuPathDB" id="HostDB:ENSMUSG00000020037"/>
<dbReference type="eggNOG" id="KOG3712">
    <property type="taxonomic scope" value="Eukaryota"/>
</dbReference>
<dbReference type="GeneTree" id="ENSGT01050000244879"/>
<dbReference type="HOGENOM" id="CLU_377067_0_0_1"/>
<dbReference type="InParanoid" id="Q7TNK1"/>
<dbReference type="OMA" id="YAHREEH"/>
<dbReference type="OrthoDB" id="10056949at2759"/>
<dbReference type="PhylomeDB" id="Q7TNK1"/>
<dbReference type="TreeFam" id="TF321340"/>
<dbReference type="BioGRID-ORCS" id="71137">
    <property type="hits" value="2 hits in 77 CRISPR screens"/>
</dbReference>
<dbReference type="PRO" id="PR:Q7TNK1"/>
<dbReference type="Proteomes" id="UP000000589">
    <property type="component" value="Chromosome 10"/>
</dbReference>
<dbReference type="RNAct" id="Q7TNK1">
    <property type="molecule type" value="protein"/>
</dbReference>
<dbReference type="Bgee" id="ENSMUSG00000020037">
    <property type="expression patterns" value="Expressed in lumbar subsegment of spinal cord and 110 other cell types or tissues"/>
</dbReference>
<dbReference type="GO" id="GO:0005634">
    <property type="term" value="C:nucleus"/>
    <property type="evidence" value="ECO:0000314"/>
    <property type="project" value="MGI"/>
</dbReference>
<dbReference type="GO" id="GO:0003682">
    <property type="term" value="F:chromatin binding"/>
    <property type="evidence" value="ECO:0000314"/>
    <property type="project" value="MGI"/>
</dbReference>
<dbReference type="GO" id="GO:0001228">
    <property type="term" value="F:DNA-binding transcription activator activity, RNA polymerase II-specific"/>
    <property type="evidence" value="ECO:0007669"/>
    <property type="project" value="Ensembl"/>
</dbReference>
<dbReference type="GO" id="GO:0000978">
    <property type="term" value="F:RNA polymerase II cis-regulatory region sequence-specific DNA binding"/>
    <property type="evidence" value="ECO:0007669"/>
    <property type="project" value="Ensembl"/>
</dbReference>
<dbReference type="GO" id="GO:0021696">
    <property type="term" value="P:cerebellar cortex morphogenesis"/>
    <property type="evidence" value="ECO:0000315"/>
    <property type="project" value="MGI"/>
</dbReference>
<dbReference type="GO" id="GO:0060271">
    <property type="term" value="P:cilium assembly"/>
    <property type="evidence" value="ECO:0000315"/>
    <property type="project" value="MGI"/>
</dbReference>
<dbReference type="GO" id="GO:0021516">
    <property type="term" value="P:dorsal spinal cord development"/>
    <property type="evidence" value="ECO:0000315"/>
    <property type="project" value="MGI"/>
</dbReference>
<dbReference type="GO" id="GO:0030900">
    <property type="term" value="P:forebrain development"/>
    <property type="evidence" value="ECO:0000315"/>
    <property type="project" value="MGI"/>
</dbReference>
<dbReference type="GO" id="GO:0030901">
    <property type="term" value="P:midbrain development"/>
    <property type="evidence" value="ECO:0000315"/>
    <property type="project" value="MGI"/>
</dbReference>
<dbReference type="GO" id="GO:0045879">
    <property type="term" value="P:negative regulation of smoothened signaling pathway"/>
    <property type="evidence" value="ECO:0000315"/>
    <property type="project" value="MGI"/>
</dbReference>
<dbReference type="GO" id="GO:0045944">
    <property type="term" value="P:positive regulation of transcription by RNA polymerase II"/>
    <property type="evidence" value="ECO:0000314"/>
    <property type="project" value="MGI"/>
</dbReference>
<dbReference type="GO" id="GO:0070613">
    <property type="term" value="P:regulation of protein processing"/>
    <property type="evidence" value="ECO:0000315"/>
    <property type="project" value="MGI"/>
</dbReference>
<dbReference type="GO" id="GO:0006357">
    <property type="term" value="P:regulation of transcription by RNA polymerase II"/>
    <property type="evidence" value="ECO:0000314"/>
    <property type="project" value="MGI"/>
</dbReference>
<dbReference type="GO" id="GO:0021537">
    <property type="term" value="P:telencephalon development"/>
    <property type="evidence" value="ECO:0000315"/>
    <property type="project" value="MGI"/>
</dbReference>
<dbReference type="FunFam" id="1.10.10.10:FF:000178">
    <property type="entry name" value="Putative Transcription factor RFX4"/>
    <property type="match status" value="1"/>
</dbReference>
<dbReference type="Gene3D" id="1.10.10.10">
    <property type="entry name" value="Winged helix-like DNA-binding domain superfamily/Winged helix DNA-binding domain"/>
    <property type="match status" value="1"/>
</dbReference>
<dbReference type="InterPro" id="IPR003150">
    <property type="entry name" value="DNA-bd_RFX"/>
</dbReference>
<dbReference type="InterPro" id="IPR039779">
    <property type="entry name" value="RFX-like"/>
</dbReference>
<dbReference type="InterPro" id="IPR036388">
    <property type="entry name" value="WH-like_DNA-bd_sf"/>
</dbReference>
<dbReference type="InterPro" id="IPR036390">
    <property type="entry name" value="WH_DNA-bd_sf"/>
</dbReference>
<dbReference type="PANTHER" id="PTHR12619">
    <property type="entry name" value="RFX TRANSCRIPTION FACTOR FAMILY"/>
    <property type="match status" value="1"/>
</dbReference>
<dbReference type="PANTHER" id="PTHR12619:SF31">
    <property type="entry name" value="TRANSCRIPTION FACTOR RFX4"/>
    <property type="match status" value="1"/>
</dbReference>
<dbReference type="Pfam" id="PF25340">
    <property type="entry name" value="BCD_RFX"/>
    <property type="match status" value="1"/>
</dbReference>
<dbReference type="Pfam" id="PF02257">
    <property type="entry name" value="RFX_DNA_binding"/>
    <property type="match status" value="1"/>
</dbReference>
<dbReference type="SUPFAM" id="SSF46785">
    <property type="entry name" value="Winged helix' DNA-binding domain"/>
    <property type="match status" value="1"/>
</dbReference>
<dbReference type="PROSITE" id="PS51526">
    <property type="entry name" value="RFX_DBD"/>
    <property type="match status" value="1"/>
</dbReference>
<sequence>MHCGLLEEPDMDSTESWIERCLNESENKRYSSHTSLGNVSNDENEEKENNRASKPHSTPATLQWLEENYEIAEGVCIPRSALYMHYLDFCEKNDTQPVNAASFGKIIRQQFPQLTTRRLGTRGQSKYHYYGIAVKESSQYYDVMYSKKGAAWVSETGKREVTKQTVAYSPRSKLGTLLPDFPNVKDLNLPASLPEEKVSTFIMMYRTHCQRILDTVIRANFDEVQSFLLHFWQGMPPHMLPVLGSSTVVNIVGVCDSILYKAISGVLMPTVLQALPDSLTQVIRKFAKQLDEWLKVALHDLPENLRNIKFELSRRFSQILRRQTSLNHLCQASRTVIHSADITFQMLEDWRNVDLSSITKQTLYTMEDSRDEHRRLIIQLYQEFDHLLEEQSPIESYIEWLDTMVDRCVVKVAAKRQGSLKKVAQQFLLMWSCFGTRVIRDMTLHSAPSFGSFHLIHLMFDDYVLYLLESLHCQERANELMRAMKGEGSTAEAQEEIILTEATPPTPSPGPSFSPAKSATSVEVPPPSSPVSNPSPEYTGLSTAGAMQSYTWSLTYTVTTAAGSPAENSQQLPCMRSTHMPSSSVTHRIPVYSHREEHGYTGSYNYGSYGNQHPHPLQNQYPALPHDTAISGPLHYSPYHRSSAQYPFNSPTSRMEPCLMSSTPRLHPTPVTPRWPEVPTANACYTSPSVHSTRYGNSSDMYTPLTTRRNSEYEHMQHFPGFAYINGEASTGWAK</sequence>
<accession>Q7TNK1</accession>
<accession>B2RS52</accession>
<accession>Q3V158</accession>
<accession>Q76KT2</accession>
<accession>Q8HWA6</accession>
<accession>Q9D453</accession>
<gene>
    <name type="primary">Rfx4</name>
</gene>